<reference key="1">
    <citation type="journal article" date="2004" name="Nat. Biotechnol.">
        <title>The genome sequence of the capnophilic rumen bacterium Mannheimia succiniciproducens.</title>
        <authorList>
            <person name="Hong S.H."/>
            <person name="Kim J.S."/>
            <person name="Lee S.Y."/>
            <person name="In Y.H."/>
            <person name="Choi S.S."/>
            <person name="Rih J.-K."/>
            <person name="Kim C.H."/>
            <person name="Jeong H."/>
            <person name="Hur C.G."/>
            <person name="Kim J.J."/>
        </authorList>
    </citation>
    <scope>NUCLEOTIDE SEQUENCE [LARGE SCALE GENOMIC DNA]</scope>
    <source>
        <strain>KCTC 0769BP / MBEL55E</strain>
    </source>
</reference>
<organism>
    <name type="scientific">Mannheimia succiniciproducens (strain KCTC 0769BP / MBEL55E)</name>
    <dbReference type="NCBI Taxonomy" id="221988"/>
    <lineage>
        <taxon>Bacteria</taxon>
        <taxon>Pseudomonadati</taxon>
        <taxon>Pseudomonadota</taxon>
        <taxon>Gammaproteobacteria</taxon>
        <taxon>Pasteurellales</taxon>
        <taxon>Pasteurellaceae</taxon>
        <taxon>Basfia</taxon>
    </lineage>
</organism>
<protein>
    <recommendedName>
        <fullName evidence="1">Phosphoglucosamine mutase</fullName>
        <ecNumber evidence="1">5.4.2.10</ecNumber>
    </recommendedName>
</protein>
<name>GLMM_MANSM</name>
<evidence type="ECO:0000255" key="1">
    <source>
        <dbReference type="HAMAP-Rule" id="MF_01554"/>
    </source>
</evidence>
<sequence length="444" mass="47335">MAERKYFGTDGVRGKVGTFPITPDFALKLGWAAGKVLASQGSRQVLIGKDTRISGYMLESALEAGLAAAGLSAAFIGPMPTPAVAYLTRTFRAEAGIVISASHNPYYDNGIKFFSAQGTKLPDEIEEAIEAMLEQPIDCVESAELGRASRIKDAAGRYIEFCKGTFPTELSLSGYKIVVDCANGATYHIAPNVMRELGAEVIEIGTSPNGMNINEKCGATDIKALKAKVLETKADVGLAYDGDGDRIMMVDHLGNVVDGDQILFIIAREDLRAGKLKGGVVGTLMSNMSLEISLKTLGIPFIRANVGDRYVLEKMVENDWKLGGENSGHIIIADKNTTGDGIIASLAVLTAMAQHKLSLNELASAVKLFPQVLINVRFSGGTNPLESDAVKAVAAEVEKRLAGKGRILLRKSGTEPLIRVMVECSDAELARKSAEEIVEAVKAN</sequence>
<feature type="chain" id="PRO_0000147913" description="Phosphoglucosamine mutase">
    <location>
        <begin position="1"/>
        <end position="444"/>
    </location>
</feature>
<feature type="active site" description="Phosphoserine intermediate" evidence="1">
    <location>
        <position position="102"/>
    </location>
</feature>
<feature type="binding site" description="via phosphate group" evidence="1">
    <location>
        <position position="102"/>
    </location>
    <ligand>
        <name>Mg(2+)</name>
        <dbReference type="ChEBI" id="CHEBI:18420"/>
    </ligand>
</feature>
<feature type="binding site" evidence="1">
    <location>
        <position position="241"/>
    </location>
    <ligand>
        <name>Mg(2+)</name>
        <dbReference type="ChEBI" id="CHEBI:18420"/>
    </ligand>
</feature>
<feature type="binding site" evidence="1">
    <location>
        <position position="243"/>
    </location>
    <ligand>
        <name>Mg(2+)</name>
        <dbReference type="ChEBI" id="CHEBI:18420"/>
    </ligand>
</feature>
<feature type="binding site" evidence="1">
    <location>
        <position position="245"/>
    </location>
    <ligand>
        <name>Mg(2+)</name>
        <dbReference type="ChEBI" id="CHEBI:18420"/>
    </ligand>
</feature>
<feature type="modified residue" description="Phosphoserine" evidence="1">
    <location>
        <position position="102"/>
    </location>
</feature>
<keyword id="KW-0413">Isomerase</keyword>
<keyword id="KW-0460">Magnesium</keyword>
<keyword id="KW-0479">Metal-binding</keyword>
<keyword id="KW-0597">Phosphoprotein</keyword>
<accession>Q65TY6</accession>
<comment type="function">
    <text evidence="1">Catalyzes the conversion of glucosamine-6-phosphate to glucosamine-1-phosphate.</text>
</comment>
<comment type="catalytic activity">
    <reaction evidence="1">
        <text>alpha-D-glucosamine 1-phosphate = D-glucosamine 6-phosphate</text>
        <dbReference type="Rhea" id="RHEA:23424"/>
        <dbReference type="ChEBI" id="CHEBI:58516"/>
        <dbReference type="ChEBI" id="CHEBI:58725"/>
        <dbReference type="EC" id="5.4.2.10"/>
    </reaction>
</comment>
<comment type="cofactor">
    <cofactor evidence="1">
        <name>Mg(2+)</name>
        <dbReference type="ChEBI" id="CHEBI:18420"/>
    </cofactor>
    <text evidence="1">Binds 1 Mg(2+) ion per subunit.</text>
</comment>
<comment type="PTM">
    <text evidence="1">Activated by phosphorylation.</text>
</comment>
<comment type="similarity">
    <text evidence="1">Belongs to the phosphohexose mutase family.</text>
</comment>
<proteinExistence type="inferred from homology"/>
<gene>
    <name evidence="1" type="primary">glmM</name>
    <name type="ordered locus">MS0967</name>
</gene>
<dbReference type="EC" id="5.4.2.10" evidence="1"/>
<dbReference type="EMBL" id="AE016827">
    <property type="protein sequence ID" value="AAU37574.1"/>
    <property type="molecule type" value="Genomic_DNA"/>
</dbReference>
<dbReference type="RefSeq" id="WP_011200144.1">
    <property type="nucleotide sequence ID" value="NC_006300.1"/>
</dbReference>
<dbReference type="SMR" id="Q65TY6"/>
<dbReference type="STRING" id="221988.MS0967"/>
<dbReference type="KEGG" id="msu:MS0967"/>
<dbReference type="eggNOG" id="COG1109">
    <property type="taxonomic scope" value="Bacteria"/>
</dbReference>
<dbReference type="HOGENOM" id="CLU_016950_7_0_6"/>
<dbReference type="OrthoDB" id="9803322at2"/>
<dbReference type="Proteomes" id="UP000000607">
    <property type="component" value="Chromosome"/>
</dbReference>
<dbReference type="GO" id="GO:0005829">
    <property type="term" value="C:cytosol"/>
    <property type="evidence" value="ECO:0007669"/>
    <property type="project" value="TreeGrafter"/>
</dbReference>
<dbReference type="GO" id="GO:0000287">
    <property type="term" value="F:magnesium ion binding"/>
    <property type="evidence" value="ECO:0007669"/>
    <property type="project" value="UniProtKB-UniRule"/>
</dbReference>
<dbReference type="GO" id="GO:0008966">
    <property type="term" value="F:phosphoglucosamine mutase activity"/>
    <property type="evidence" value="ECO:0007669"/>
    <property type="project" value="UniProtKB-UniRule"/>
</dbReference>
<dbReference type="GO" id="GO:0004615">
    <property type="term" value="F:phosphomannomutase activity"/>
    <property type="evidence" value="ECO:0007669"/>
    <property type="project" value="TreeGrafter"/>
</dbReference>
<dbReference type="GO" id="GO:0005975">
    <property type="term" value="P:carbohydrate metabolic process"/>
    <property type="evidence" value="ECO:0007669"/>
    <property type="project" value="InterPro"/>
</dbReference>
<dbReference type="GO" id="GO:0009252">
    <property type="term" value="P:peptidoglycan biosynthetic process"/>
    <property type="evidence" value="ECO:0007669"/>
    <property type="project" value="TreeGrafter"/>
</dbReference>
<dbReference type="GO" id="GO:0006048">
    <property type="term" value="P:UDP-N-acetylglucosamine biosynthetic process"/>
    <property type="evidence" value="ECO:0007669"/>
    <property type="project" value="TreeGrafter"/>
</dbReference>
<dbReference type="CDD" id="cd05802">
    <property type="entry name" value="GlmM"/>
    <property type="match status" value="1"/>
</dbReference>
<dbReference type="FunFam" id="3.30.310.50:FF:000001">
    <property type="entry name" value="Phosphoglucosamine mutase"/>
    <property type="match status" value="1"/>
</dbReference>
<dbReference type="FunFam" id="3.40.120.10:FF:000001">
    <property type="entry name" value="Phosphoglucosamine mutase"/>
    <property type="match status" value="1"/>
</dbReference>
<dbReference type="FunFam" id="3.40.120.10:FF:000003">
    <property type="entry name" value="Phosphoglucosamine mutase"/>
    <property type="match status" value="1"/>
</dbReference>
<dbReference type="Gene3D" id="3.40.120.10">
    <property type="entry name" value="Alpha-D-Glucose-1,6-Bisphosphate, subunit A, domain 3"/>
    <property type="match status" value="3"/>
</dbReference>
<dbReference type="Gene3D" id="3.30.310.50">
    <property type="entry name" value="Alpha-D-phosphohexomutase, C-terminal domain"/>
    <property type="match status" value="1"/>
</dbReference>
<dbReference type="HAMAP" id="MF_01554_B">
    <property type="entry name" value="GlmM_B"/>
    <property type="match status" value="1"/>
</dbReference>
<dbReference type="InterPro" id="IPR005844">
    <property type="entry name" value="A-D-PHexomutase_a/b/a-I"/>
</dbReference>
<dbReference type="InterPro" id="IPR016055">
    <property type="entry name" value="A-D-PHexomutase_a/b/a-I/II/III"/>
</dbReference>
<dbReference type="InterPro" id="IPR005845">
    <property type="entry name" value="A-D-PHexomutase_a/b/a-II"/>
</dbReference>
<dbReference type="InterPro" id="IPR005846">
    <property type="entry name" value="A-D-PHexomutase_a/b/a-III"/>
</dbReference>
<dbReference type="InterPro" id="IPR005843">
    <property type="entry name" value="A-D-PHexomutase_C"/>
</dbReference>
<dbReference type="InterPro" id="IPR036900">
    <property type="entry name" value="A-D-PHexomutase_C_sf"/>
</dbReference>
<dbReference type="InterPro" id="IPR016066">
    <property type="entry name" value="A-D-PHexomutase_CS"/>
</dbReference>
<dbReference type="InterPro" id="IPR005841">
    <property type="entry name" value="Alpha-D-phosphohexomutase_SF"/>
</dbReference>
<dbReference type="InterPro" id="IPR006352">
    <property type="entry name" value="GlmM_bact"/>
</dbReference>
<dbReference type="InterPro" id="IPR050060">
    <property type="entry name" value="Phosphoglucosamine_mutase"/>
</dbReference>
<dbReference type="NCBIfam" id="TIGR01455">
    <property type="entry name" value="glmM"/>
    <property type="match status" value="1"/>
</dbReference>
<dbReference type="NCBIfam" id="NF008139">
    <property type="entry name" value="PRK10887.1"/>
    <property type="match status" value="1"/>
</dbReference>
<dbReference type="PANTHER" id="PTHR42946:SF1">
    <property type="entry name" value="PHOSPHOGLUCOMUTASE (ALPHA-D-GLUCOSE-1,6-BISPHOSPHATE-DEPENDENT)"/>
    <property type="match status" value="1"/>
</dbReference>
<dbReference type="PANTHER" id="PTHR42946">
    <property type="entry name" value="PHOSPHOHEXOSE MUTASE"/>
    <property type="match status" value="1"/>
</dbReference>
<dbReference type="Pfam" id="PF02878">
    <property type="entry name" value="PGM_PMM_I"/>
    <property type="match status" value="1"/>
</dbReference>
<dbReference type="Pfam" id="PF02879">
    <property type="entry name" value="PGM_PMM_II"/>
    <property type="match status" value="1"/>
</dbReference>
<dbReference type="Pfam" id="PF02880">
    <property type="entry name" value="PGM_PMM_III"/>
    <property type="match status" value="1"/>
</dbReference>
<dbReference type="Pfam" id="PF00408">
    <property type="entry name" value="PGM_PMM_IV"/>
    <property type="match status" value="1"/>
</dbReference>
<dbReference type="PRINTS" id="PR00509">
    <property type="entry name" value="PGMPMM"/>
</dbReference>
<dbReference type="SUPFAM" id="SSF55957">
    <property type="entry name" value="Phosphoglucomutase, C-terminal domain"/>
    <property type="match status" value="1"/>
</dbReference>
<dbReference type="SUPFAM" id="SSF53738">
    <property type="entry name" value="Phosphoglucomutase, first 3 domains"/>
    <property type="match status" value="3"/>
</dbReference>
<dbReference type="PROSITE" id="PS00710">
    <property type="entry name" value="PGM_PMM"/>
    <property type="match status" value="1"/>
</dbReference>